<organism>
    <name type="scientific">Synechocystis sp. (strain ATCC 27184 / PCC 6803 / Kazusa)</name>
    <dbReference type="NCBI Taxonomy" id="1111708"/>
    <lineage>
        <taxon>Bacteria</taxon>
        <taxon>Bacillati</taxon>
        <taxon>Cyanobacteriota</taxon>
        <taxon>Cyanophyceae</taxon>
        <taxon>Synechococcales</taxon>
        <taxon>Merismopediaceae</taxon>
        <taxon>Synechocystis</taxon>
    </lineage>
</organism>
<sequence>MAKNTQTQALKILPLGGLHEIGKNTCVFEYDDEILLLDAGLAFPTDDMHGVNVVLPDMTYLRENREKIKGMVVTHGHEDHIGGIAYHLKQFDIPIIYGPRLAMALLRDKLEEAGMLERTNLQTVSPREMVRLGKSFVVEFIRNTHSIADSYCLAIHTPLGVVMHSGDFKIDHTPIDGEFFDLQKVAEYGEKGVLCLLSDSTNAEVPGITPSEASVIPNLDRVFSQAEGRLMVTTFASSVHRVNIILSLAQKHQRKVAVVGRSMLNVIAHARKLGYIKCPDNLFVPLKAARNLPDQQQLILTTGSQGEPLAAMTRISNGEHPQIKIRQGDTVVFSANPIPGNTIAVVNTIDRLMMQGANVIYGKHQGIHVSGHASQEEHKMLLALTRPKFFVPVHGEHRMLVKHSQMAQAQGIPSENIVIVNNGDVIELTGDRIRVAGQVPSGIELVDQAGIVHESTMAERQQMAEDGLVTVAAALSKTGTLLAYPEVHCRGVVMTIQPKLLEELIVRTIENFLTERWSEFTHGSNGSTEVSWNALQKELESSLQRLIKRELQSSPMVLLMLQTDTPIELDQVPQNVSTVSATSATPAPRKKVVLTKTPEPKVKAKPEKKVVTTAEPSAQPVSTTKVYRRSRKRSTTSVSS</sequence>
<evidence type="ECO:0000250" key="1"/>
<evidence type="ECO:0000255" key="2">
    <source>
        <dbReference type="HAMAP-Rule" id="MF_01491"/>
    </source>
</evidence>
<evidence type="ECO:0000256" key="3">
    <source>
        <dbReference type="SAM" id="MobiDB-lite"/>
    </source>
</evidence>
<keyword id="KW-0963">Cytoplasm</keyword>
<keyword id="KW-0255">Endonuclease</keyword>
<keyword id="KW-0269">Exonuclease</keyword>
<keyword id="KW-0378">Hydrolase</keyword>
<keyword id="KW-0479">Metal-binding</keyword>
<keyword id="KW-0540">Nuclease</keyword>
<keyword id="KW-1185">Reference proteome</keyword>
<keyword id="KW-0694">RNA-binding</keyword>
<keyword id="KW-0698">rRNA processing</keyword>
<keyword id="KW-0862">Zinc</keyword>
<feature type="chain" id="PRO_0000215273" description="Ribonuclease J">
    <location>
        <begin position="1"/>
        <end position="640"/>
    </location>
</feature>
<feature type="region of interest" description="Disordered" evidence="3">
    <location>
        <begin position="578"/>
        <end position="640"/>
    </location>
</feature>
<feature type="compositionally biased region" description="Basic and acidic residues" evidence="3">
    <location>
        <begin position="598"/>
        <end position="610"/>
    </location>
</feature>
<feature type="binding site" evidence="2">
    <location>
        <position position="75"/>
    </location>
    <ligand>
        <name>Zn(2+)</name>
        <dbReference type="ChEBI" id="CHEBI:29105"/>
        <label>1</label>
        <note>catalytic</note>
    </ligand>
</feature>
<feature type="binding site" evidence="2">
    <location>
        <position position="77"/>
    </location>
    <ligand>
        <name>Zn(2+)</name>
        <dbReference type="ChEBI" id="CHEBI:29105"/>
        <label>1</label>
        <note>catalytic</note>
    </ligand>
</feature>
<feature type="binding site" evidence="2">
    <location>
        <position position="79"/>
    </location>
    <ligand>
        <name>Zn(2+)</name>
        <dbReference type="ChEBI" id="CHEBI:29105"/>
        <label>2</label>
        <note>catalytic</note>
    </ligand>
</feature>
<feature type="binding site" evidence="2">
    <location>
        <position position="80"/>
    </location>
    <ligand>
        <name>Zn(2+)</name>
        <dbReference type="ChEBI" id="CHEBI:29105"/>
        <label>2</label>
        <note>catalytic</note>
    </ligand>
</feature>
<feature type="binding site" evidence="2">
    <location>
        <position position="145"/>
    </location>
    <ligand>
        <name>Zn(2+)</name>
        <dbReference type="ChEBI" id="CHEBI:29105"/>
        <label>1</label>
        <note>catalytic</note>
    </ligand>
</feature>
<feature type="binding site" evidence="2">
    <location>
        <position position="167"/>
    </location>
    <ligand>
        <name>Zn(2+)</name>
        <dbReference type="ChEBI" id="CHEBI:29105"/>
        <label>1</label>
        <note>catalytic</note>
    </ligand>
</feature>
<feature type="binding site" evidence="2">
    <location>
        <position position="167"/>
    </location>
    <ligand>
        <name>Zn(2+)</name>
        <dbReference type="ChEBI" id="CHEBI:29105"/>
        <label>2</label>
        <note>catalytic</note>
    </ligand>
</feature>
<feature type="binding site" evidence="2">
    <location>
        <begin position="368"/>
        <end position="372"/>
    </location>
    <ligand>
        <name>substrate</name>
    </ligand>
</feature>
<feature type="binding site" evidence="2">
    <location>
        <position position="394"/>
    </location>
    <ligand>
        <name>Zn(2+)</name>
        <dbReference type="ChEBI" id="CHEBI:29105"/>
        <label>2</label>
        <note>catalytic</note>
    </ligand>
</feature>
<proteinExistence type="inferred from homology"/>
<name>RNJ_SYNY3</name>
<accession>P54123</accession>
<dbReference type="EC" id="3.1.-.-" evidence="2"/>
<dbReference type="EMBL" id="BA000022">
    <property type="protein sequence ID" value="BAA10871.1"/>
    <property type="molecule type" value="Genomic_DNA"/>
</dbReference>
<dbReference type="PIR" id="S76024">
    <property type="entry name" value="S76024"/>
</dbReference>
<dbReference type="SMR" id="P54123"/>
<dbReference type="FunCoup" id="P54123">
    <property type="interactions" value="254"/>
</dbReference>
<dbReference type="IntAct" id="P54123">
    <property type="interactions" value="4"/>
</dbReference>
<dbReference type="STRING" id="1148.gene:10500377"/>
<dbReference type="PaxDb" id="1148-1001381"/>
<dbReference type="EnsemblBacteria" id="BAA10871">
    <property type="protein sequence ID" value="BAA10871"/>
    <property type="gene ID" value="BAA10871"/>
</dbReference>
<dbReference type="KEGG" id="syn:slr0551"/>
<dbReference type="eggNOG" id="COG0595">
    <property type="taxonomic scope" value="Bacteria"/>
</dbReference>
<dbReference type="InParanoid" id="P54123"/>
<dbReference type="PhylomeDB" id="P54123"/>
<dbReference type="Proteomes" id="UP000001425">
    <property type="component" value="Chromosome"/>
</dbReference>
<dbReference type="GO" id="GO:0005737">
    <property type="term" value="C:cytoplasm"/>
    <property type="evidence" value="ECO:0007669"/>
    <property type="project" value="UniProtKB-SubCell"/>
</dbReference>
<dbReference type="GO" id="GO:0004534">
    <property type="term" value="F:5'-3' RNA exonuclease activity"/>
    <property type="evidence" value="ECO:0007669"/>
    <property type="project" value="UniProtKB-UniRule"/>
</dbReference>
<dbReference type="GO" id="GO:0003723">
    <property type="term" value="F:RNA binding"/>
    <property type="evidence" value="ECO:0007669"/>
    <property type="project" value="UniProtKB-UniRule"/>
</dbReference>
<dbReference type="GO" id="GO:0004521">
    <property type="term" value="F:RNA endonuclease activity"/>
    <property type="evidence" value="ECO:0007669"/>
    <property type="project" value="UniProtKB-UniRule"/>
</dbReference>
<dbReference type="GO" id="GO:0008270">
    <property type="term" value="F:zinc ion binding"/>
    <property type="evidence" value="ECO:0007669"/>
    <property type="project" value="InterPro"/>
</dbReference>
<dbReference type="GO" id="GO:0006364">
    <property type="term" value="P:rRNA processing"/>
    <property type="evidence" value="ECO:0007669"/>
    <property type="project" value="UniProtKB-UniRule"/>
</dbReference>
<dbReference type="CDD" id="cd07714">
    <property type="entry name" value="RNaseJ_MBL-fold"/>
    <property type="match status" value="1"/>
</dbReference>
<dbReference type="Gene3D" id="3.10.20.580">
    <property type="match status" value="1"/>
</dbReference>
<dbReference type="Gene3D" id="3.40.50.10710">
    <property type="entry name" value="Metallo-hydrolase/oxidoreductase"/>
    <property type="match status" value="1"/>
</dbReference>
<dbReference type="Gene3D" id="3.60.15.10">
    <property type="entry name" value="Ribonuclease Z/Hydroxyacylglutathione hydrolase-like"/>
    <property type="match status" value="1"/>
</dbReference>
<dbReference type="HAMAP" id="MF_01491">
    <property type="entry name" value="RNase_J_bact"/>
    <property type="match status" value="1"/>
</dbReference>
<dbReference type="InterPro" id="IPR001279">
    <property type="entry name" value="Metallo-B-lactamas"/>
</dbReference>
<dbReference type="InterPro" id="IPR036866">
    <property type="entry name" value="RibonucZ/Hydroxyglut_hydro"/>
</dbReference>
<dbReference type="InterPro" id="IPR011108">
    <property type="entry name" value="RMMBL"/>
</dbReference>
<dbReference type="InterPro" id="IPR004613">
    <property type="entry name" value="RNase_J"/>
</dbReference>
<dbReference type="InterPro" id="IPR042173">
    <property type="entry name" value="RNase_J_2"/>
</dbReference>
<dbReference type="InterPro" id="IPR055132">
    <property type="entry name" value="RNase_J_b_CASP"/>
</dbReference>
<dbReference type="InterPro" id="IPR030854">
    <property type="entry name" value="RNase_J_bac"/>
</dbReference>
<dbReference type="InterPro" id="IPR041636">
    <property type="entry name" value="RNase_J_C"/>
</dbReference>
<dbReference type="InterPro" id="IPR001587">
    <property type="entry name" value="RNase_J_CS"/>
</dbReference>
<dbReference type="NCBIfam" id="TIGR00649">
    <property type="entry name" value="MG423"/>
    <property type="match status" value="1"/>
</dbReference>
<dbReference type="PANTHER" id="PTHR43694">
    <property type="entry name" value="RIBONUCLEASE J"/>
    <property type="match status" value="1"/>
</dbReference>
<dbReference type="PANTHER" id="PTHR43694:SF1">
    <property type="entry name" value="RIBONUCLEASE J"/>
    <property type="match status" value="1"/>
</dbReference>
<dbReference type="Pfam" id="PF00753">
    <property type="entry name" value="Lactamase_B"/>
    <property type="match status" value="1"/>
</dbReference>
<dbReference type="Pfam" id="PF07521">
    <property type="entry name" value="RMMBL"/>
    <property type="match status" value="1"/>
</dbReference>
<dbReference type="Pfam" id="PF22505">
    <property type="entry name" value="RNase_J_b_CASP"/>
    <property type="match status" value="1"/>
</dbReference>
<dbReference type="Pfam" id="PF17770">
    <property type="entry name" value="RNase_J_C"/>
    <property type="match status" value="1"/>
</dbReference>
<dbReference type="PIRSF" id="PIRSF004803">
    <property type="entry name" value="RnjA"/>
    <property type="match status" value="1"/>
</dbReference>
<dbReference type="SMART" id="SM00849">
    <property type="entry name" value="Lactamase_B"/>
    <property type="match status" value="1"/>
</dbReference>
<dbReference type="SUPFAM" id="SSF56281">
    <property type="entry name" value="Metallo-hydrolase/oxidoreductase"/>
    <property type="match status" value="1"/>
</dbReference>
<dbReference type="PROSITE" id="PS01292">
    <property type="entry name" value="UPF0036"/>
    <property type="match status" value="1"/>
</dbReference>
<comment type="function">
    <text evidence="1">An RNase that has 5'-3' exonuclease and possibly endoonuclease activity. Involved in maturation of rRNA and in some organisms also mRNA maturation and/or decay (By similarity).</text>
</comment>
<comment type="cofactor">
    <cofactor evidence="2">
        <name>Zn(2+)</name>
        <dbReference type="ChEBI" id="CHEBI:29105"/>
    </cofactor>
    <text evidence="2">Binds up to 2 Zn(2+) ions per subunit. It is not clear if Zn(2+) or Mg(2+) is physiologically important.</text>
</comment>
<comment type="subunit">
    <text evidence="2">Homodimer, may be a subunit of the RNA degradosome.</text>
</comment>
<comment type="subcellular location">
    <subcellularLocation>
        <location evidence="2">Cytoplasm</location>
    </subcellularLocation>
</comment>
<comment type="similarity">
    <text evidence="2">Belongs to the metallo-beta-lactamase superfamily. RNA-metabolizing metallo-beta-lactamase-like family. Bacterial RNase J subfamily.</text>
</comment>
<protein>
    <recommendedName>
        <fullName evidence="2">Ribonuclease J</fullName>
        <shortName evidence="2">RNase J</shortName>
        <ecNumber evidence="2">3.1.-.-</ecNumber>
    </recommendedName>
</protein>
<gene>
    <name evidence="2" type="primary">rnj</name>
    <name type="ordered locus">slr0551</name>
</gene>
<reference key="1">
    <citation type="journal article" date="1995" name="DNA Res.">
        <title>Sequence analysis of the genome of the unicellular cyanobacterium Synechocystis sp. strain PCC6803. I. Sequence features in the 1 Mb region from map positions 64% to 92% of the genome.</title>
        <authorList>
            <person name="Kaneko T."/>
            <person name="Tanaka A."/>
            <person name="Sato S."/>
            <person name="Kotani H."/>
            <person name="Sazuka T."/>
            <person name="Miyajima N."/>
            <person name="Sugiura M."/>
            <person name="Tabata S."/>
        </authorList>
    </citation>
    <scope>NUCLEOTIDE SEQUENCE [LARGE SCALE GENOMIC DNA]</scope>
    <source>
        <strain>ATCC 27184 / PCC 6803 / N-1</strain>
    </source>
</reference>
<reference key="2">
    <citation type="journal article" date="1996" name="DNA Res.">
        <title>Sequence analysis of the genome of the unicellular cyanobacterium Synechocystis sp. strain PCC6803. II. Sequence determination of the entire genome and assignment of potential protein-coding regions.</title>
        <authorList>
            <person name="Kaneko T."/>
            <person name="Sato S."/>
            <person name="Kotani H."/>
            <person name="Tanaka A."/>
            <person name="Asamizu E."/>
            <person name="Nakamura Y."/>
            <person name="Miyajima N."/>
            <person name="Hirosawa M."/>
            <person name="Sugiura M."/>
            <person name="Sasamoto S."/>
            <person name="Kimura T."/>
            <person name="Hosouchi T."/>
            <person name="Matsuno A."/>
            <person name="Muraki A."/>
            <person name="Nakazaki N."/>
            <person name="Naruo K."/>
            <person name="Okumura S."/>
            <person name="Shimpo S."/>
            <person name="Takeuchi C."/>
            <person name="Wada T."/>
            <person name="Watanabe A."/>
            <person name="Yamada M."/>
            <person name="Yasuda M."/>
            <person name="Tabata S."/>
        </authorList>
    </citation>
    <scope>NUCLEOTIDE SEQUENCE [LARGE SCALE GENOMIC DNA]</scope>
    <source>
        <strain>ATCC 27184 / PCC 6803 / Kazusa</strain>
    </source>
</reference>